<organism>
    <name type="scientific">Phoneutria nigriventer</name>
    <name type="common">Brazilian armed spider</name>
    <name type="synonym">Ctenus nigriventer</name>
    <dbReference type="NCBI Taxonomy" id="6918"/>
    <lineage>
        <taxon>Eukaryota</taxon>
        <taxon>Metazoa</taxon>
        <taxon>Ecdysozoa</taxon>
        <taxon>Arthropoda</taxon>
        <taxon>Chelicerata</taxon>
        <taxon>Arachnida</taxon>
        <taxon>Araneae</taxon>
        <taxon>Araneomorphae</taxon>
        <taxon>Entelegynae</taxon>
        <taxon>Lycosoidea</taxon>
        <taxon>Ctenidae</taxon>
        <taxon>Phoneutria</taxon>
    </lineage>
</organism>
<keyword id="KW-0903">Direct protein sequencing</keyword>
<keyword id="KW-1015">Disulfide bond</keyword>
<keyword id="KW-0960">Knottin</keyword>
<keyword id="KW-0528">Neurotoxin</keyword>
<keyword id="KW-0964">Secreted</keyword>
<keyword id="KW-0800">Toxin</keyword>
<accession>P83999</accession>
<reference evidence="3" key="1">
    <citation type="submission" date="2004-06" db="UniProtKB">
        <title>Neurotoxin PNTx30C3 from venom of Brazilian armed spider Phoneutria nigriventer has sequence similarities with toxins from other spiders.</title>
        <authorList>
            <person name="Richardson M."/>
            <person name="Pimenta A.M.C."/>
            <person name="Bemquerer M.P."/>
            <person name="Santoro M.M."/>
            <person name="Figueiredo S.G."/>
            <person name="Cordeiro M.N."/>
        </authorList>
    </citation>
    <scope>PROTEIN SEQUENCE</scope>
    <scope>FUNCTION</scope>
    <scope>SUBCELLULAR LOCATION</scope>
    <scope>TISSUE SPECIFICITY</scope>
    <scope>MASS SPECTROMETRY</scope>
    <source>
        <tissue>Venom</tissue>
    </source>
</reference>
<name>TX30_PHONI</name>
<comment type="function">
    <text evidence="1">Neurotoxin. Causes spastic paralysis and death in mice by intracerebroventricular injection at dose levels of 3 ug per mouse.</text>
</comment>
<comment type="subcellular location">
    <subcellularLocation>
        <location evidence="1">Secreted</location>
    </subcellularLocation>
</comment>
<comment type="tissue specificity">
    <text evidence="1">Expressed by the venom gland.</text>
</comment>
<comment type="domain">
    <text evidence="3">The presence of a 'disulfide through disulfide knot' structurally defines this protein as a knottin.</text>
</comment>
<comment type="mass spectrometry" mass="7876.6" method="Electrospray" evidence="1"/>
<comment type="similarity">
    <text evidence="3">Belongs to the neurotoxin 37 family.</text>
</comment>
<protein>
    <recommendedName>
        <fullName>U18-ctenitoxin-Pn1a</fullName>
        <shortName>U18-CNTX-Pn1a</shortName>
    </recommendedName>
    <alternativeName>
        <fullName>Neurotoxin PNTx30C3</fullName>
    </alternativeName>
</protein>
<proteinExistence type="evidence at protein level"/>
<sequence length="47" mass="5206">SCFEGGKDCKNDCQCCGKWSYCKCPIWGLFGCSCVIGDSMVEVRKCQ</sequence>
<feature type="chain" id="PRO_0000087648" description="U18-ctenitoxin-Pn1a">
    <location>
        <begin position="1"/>
        <end position="47" status="greater than"/>
    </location>
</feature>
<feature type="disulfide bond" evidence="3">
    <location>
        <begin position="2"/>
        <end position="16"/>
    </location>
</feature>
<feature type="disulfide bond" evidence="3">
    <location>
        <begin position="9"/>
        <end position="22"/>
    </location>
</feature>
<feature type="disulfide bond" evidence="3">
    <location>
        <begin position="13"/>
        <end position="46"/>
    </location>
</feature>
<feature type="disulfide bond" evidence="3">
    <location>
        <begin position="15"/>
        <end position="34"/>
    </location>
</feature>
<feature type="disulfide bond" evidence="3">
    <location>
        <begin position="24"/>
        <end position="32"/>
    </location>
</feature>
<feature type="non-terminal residue" evidence="2">
    <location>
        <position position="47"/>
    </location>
</feature>
<evidence type="ECO:0000269" key="1">
    <source ref="1"/>
</evidence>
<evidence type="ECO:0000303" key="2">
    <source ref="1"/>
</evidence>
<evidence type="ECO:0000305" key="3"/>
<dbReference type="SMR" id="P83999"/>
<dbReference type="ArachnoServer" id="AS000254">
    <property type="toxin name" value="U18-ctenitoxin-Pn1a"/>
</dbReference>
<dbReference type="GO" id="GO:0005576">
    <property type="term" value="C:extracellular region"/>
    <property type="evidence" value="ECO:0007669"/>
    <property type="project" value="UniProtKB-SubCell"/>
</dbReference>
<dbReference type="GO" id="GO:0090729">
    <property type="term" value="F:toxin activity"/>
    <property type="evidence" value="ECO:0007669"/>
    <property type="project" value="UniProtKB-KW"/>
</dbReference>
<dbReference type="InterPro" id="IPR013605">
    <property type="entry name" value="Toxin_34"/>
</dbReference>
<dbReference type="Pfam" id="PF08396">
    <property type="entry name" value="Toxin_34"/>
    <property type="match status" value="1"/>
</dbReference>